<dbReference type="EC" id="6.3.4.2" evidence="1"/>
<dbReference type="EMBL" id="BX950851">
    <property type="protein sequence ID" value="CAG76465.1"/>
    <property type="molecule type" value="Genomic_DNA"/>
</dbReference>
<dbReference type="RefSeq" id="WP_011095070.1">
    <property type="nucleotide sequence ID" value="NC_004547.2"/>
</dbReference>
<dbReference type="SMR" id="Q6D181"/>
<dbReference type="STRING" id="218491.ECA3567"/>
<dbReference type="GeneID" id="57210241"/>
<dbReference type="KEGG" id="eca:ECA3567"/>
<dbReference type="PATRIC" id="fig|218491.5.peg.3615"/>
<dbReference type="eggNOG" id="COG0504">
    <property type="taxonomic scope" value="Bacteria"/>
</dbReference>
<dbReference type="HOGENOM" id="CLU_011675_5_0_6"/>
<dbReference type="OrthoDB" id="9801107at2"/>
<dbReference type="UniPathway" id="UPA00159">
    <property type="reaction ID" value="UER00277"/>
</dbReference>
<dbReference type="Proteomes" id="UP000007966">
    <property type="component" value="Chromosome"/>
</dbReference>
<dbReference type="GO" id="GO:0005829">
    <property type="term" value="C:cytosol"/>
    <property type="evidence" value="ECO:0007669"/>
    <property type="project" value="TreeGrafter"/>
</dbReference>
<dbReference type="GO" id="GO:0005524">
    <property type="term" value="F:ATP binding"/>
    <property type="evidence" value="ECO:0007669"/>
    <property type="project" value="UniProtKB-KW"/>
</dbReference>
<dbReference type="GO" id="GO:0003883">
    <property type="term" value="F:CTP synthase activity"/>
    <property type="evidence" value="ECO:0007669"/>
    <property type="project" value="UniProtKB-UniRule"/>
</dbReference>
<dbReference type="GO" id="GO:0004359">
    <property type="term" value="F:glutaminase activity"/>
    <property type="evidence" value="ECO:0007669"/>
    <property type="project" value="RHEA"/>
</dbReference>
<dbReference type="GO" id="GO:0042802">
    <property type="term" value="F:identical protein binding"/>
    <property type="evidence" value="ECO:0007669"/>
    <property type="project" value="TreeGrafter"/>
</dbReference>
<dbReference type="GO" id="GO:0046872">
    <property type="term" value="F:metal ion binding"/>
    <property type="evidence" value="ECO:0007669"/>
    <property type="project" value="UniProtKB-KW"/>
</dbReference>
<dbReference type="GO" id="GO:0044210">
    <property type="term" value="P:'de novo' CTP biosynthetic process"/>
    <property type="evidence" value="ECO:0007669"/>
    <property type="project" value="UniProtKB-UniRule"/>
</dbReference>
<dbReference type="GO" id="GO:0019856">
    <property type="term" value="P:pyrimidine nucleobase biosynthetic process"/>
    <property type="evidence" value="ECO:0007669"/>
    <property type="project" value="TreeGrafter"/>
</dbReference>
<dbReference type="CDD" id="cd03113">
    <property type="entry name" value="CTPS_N"/>
    <property type="match status" value="1"/>
</dbReference>
<dbReference type="CDD" id="cd01746">
    <property type="entry name" value="GATase1_CTP_Synthase"/>
    <property type="match status" value="1"/>
</dbReference>
<dbReference type="FunFam" id="3.40.50.300:FF:000009">
    <property type="entry name" value="CTP synthase"/>
    <property type="match status" value="1"/>
</dbReference>
<dbReference type="FunFam" id="3.40.50.880:FF:000002">
    <property type="entry name" value="CTP synthase"/>
    <property type="match status" value="1"/>
</dbReference>
<dbReference type="Gene3D" id="3.40.50.880">
    <property type="match status" value="1"/>
</dbReference>
<dbReference type="Gene3D" id="3.40.50.300">
    <property type="entry name" value="P-loop containing nucleotide triphosphate hydrolases"/>
    <property type="match status" value="1"/>
</dbReference>
<dbReference type="HAMAP" id="MF_01227">
    <property type="entry name" value="PyrG"/>
    <property type="match status" value="1"/>
</dbReference>
<dbReference type="InterPro" id="IPR029062">
    <property type="entry name" value="Class_I_gatase-like"/>
</dbReference>
<dbReference type="InterPro" id="IPR004468">
    <property type="entry name" value="CTP_synthase"/>
</dbReference>
<dbReference type="InterPro" id="IPR017456">
    <property type="entry name" value="CTP_synthase_N"/>
</dbReference>
<dbReference type="InterPro" id="IPR017926">
    <property type="entry name" value="GATASE"/>
</dbReference>
<dbReference type="InterPro" id="IPR033828">
    <property type="entry name" value="GATase1_CTP_Synthase"/>
</dbReference>
<dbReference type="InterPro" id="IPR027417">
    <property type="entry name" value="P-loop_NTPase"/>
</dbReference>
<dbReference type="NCBIfam" id="NF003792">
    <property type="entry name" value="PRK05380.1"/>
    <property type="match status" value="1"/>
</dbReference>
<dbReference type="NCBIfam" id="TIGR00337">
    <property type="entry name" value="PyrG"/>
    <property type="match status" value="1"/>
</dbReference>
<dbReference type="PANTHER" id="PTHR11550">
    <property type="entry name" value="CTP SYNTHASE"/>
    <property type="match status" value="1"/>
</dbReference>
<dbReference type="PANTHER" id="PTHR11550:SF0">
    <property type="entry name" value="CTP SYNTHASE-RELATED"/>
    <property type="match status" value="1"/>
</dbReference>
<dbReference type="Pfam" id="PF06418">
    <property type="entry name" value="CTP_synth_N"/>
    <property type="match status" value="1"/>
</dbReference>
<dbReference type="Pfam" id="PF00117">
    <property type="entry name" value="GATase"/>
    <property type="match status" value="1"/>
</dbReference>
<dbReference type="SUPFAM" id="SSF52317">
    <property type="entry name" value="Class I glutamine amidotransferase-like"/>
    <property type="match status" value="1"/>
</dbReference>
<dbReference type="SUPFAM" id="SSF52540">
    <property type="entry name" value="P-loop containing nucleoside triphosphate hydrolases"/>
    <property type="match status" value="1"/>
</dbReference>
<dbReference type="PROSITE" id="PS51273">
    <property type="entry name" value="GATASE_TYPE_1"/>
    <property type="match status" value="1"/>
</dbReference>
<comment type="function">
    <text evidence="1">Catalyzes the ATP-dependent amination of UTP to CTP with either L-glutamine or ammonia as the source of nitrogen. Regulates intracellular CTP levels through interactions with the four ribonucleotide triphosphates.</text>
</comment>
<comment type="catalytic activity">
    <reaction evidence="1">
        <text>UTP + L-glutamine + ATP + H2O = CTP + L-glutamate + ADP + phosphate + 2 H(+)</text>
        <dbReference type="Rhea" id="RHEA:26426"/>
        <dbReference type="ChEBI" id="CHEBI:15377"/>
        <dbReference type="ChEBI" id="CHEBI:15378"/>
        <dbReference type="ChEBI" id="CHEBI:29985"/>
        <dbReference type="ChEBI" id="CHEBI:30616"/>
        <dbReference type="ChEBI" id="CHEBI:37563"/>
        <dbReference type="ChEBI" id="CHEBI:43474"/>
        <dbReference type="ChEBI" id="CHEBI:46398"/>
        <dbReference type="ChEBI" id="CHEBI:58359"/>
        <dbReference type="ChEBI" id="CHEBI:456216"/>
        <dbReference type="EC" id="6.3.4.2"/>
    </reaction>
</comment>
<comment type="catalytic activity">
    <reaction evidence="1">
        <text>L-glutamine + H2O = L-glutamate + NH4(+)</text>
        <dbReference type="Rhea" id="RHEA:15889"/>
        <dbReference type="ChEBI" id="CHEBI:15377"/>
        <dbReference type="ChEBI" id="CHEBI:28938"/>
        <dbReference type="ChEBI" id="CHEBI:29985"/>
        <dbReference type="ChEBI" id="CHEBI:58359"/>
    </reaction>
</comment>
<comment type="catalytic activity">
    <reaction evidence="1">
        <text>UTP + NH4(+) + ATP = CTP + ADP + phosphate + 2 H(+)</text>
        <dbReference type="Rhea" id="RHEA:16597"/>
        <dbReference type="ChEBI" id="CHEBI:15378"/>
        <dbReference type="ChEBI" id="CHEBI:28938"/>
        <dbReference type="ChEBI" id="CHEBI:30616"/>
        <dbReference type="ChEBI" id="CHEBI:37563"/>
        <dbReference type="ChEBI" id="CHEBI:43474"/>
        <dbReference type="ChEBI" id="CHEBI:46398"/>
        <dbReference type="ChEBI" id="CHEBI:456216"/>
    </reaction>
</comment>
<comment type="activity regulation">
    <text evidence="1">Allosterically activated by GTP, when glutamine is the substrate; GTP has no effect on the reaction when ammonia is the substrate. The allosteric effector GTP functions by stabilizing the protein conformation that binds the tetrahedral intermediate(s) formed during glutamine hydrolysis. Inhibited by the product CTP, via allosteric rather than competitive inhibition.</text>
</comment>
<comment type="pathway">
    <text evidence="1">Pyrimidine metabolism; CTP biosynthesis via de novo pathway; CTP from UDP: step 2/2.</text>
</comment>
<comment type="subunit">
    <text evidence="1">Homotetramer.</text>
</comment>
<comment type="miscellaneous">
    <text evidence="1">CTPSs have evolved a hybrid strategy for distinguishing between UTP and CTP. The overlapping regions of the product feedback inhibitory and substrate sites recognize a common feature in both compounds, the triphosphate moiety. To differentiate isosteric substrate and product pyrimidine rings, an additional pocket far from the expected kinase/ligase catalytic site, specifically recognizes the cytosine and ribose portions of the product inhibitor.</text>
</comment>
<comment type="similarity">
    <text evidence="1">Belongs to the CTP synthase family.</text>
</comment>
<accession>Q6D181</accession>
<gene>
    <name evidence="1" type="primary">pyrG</name>
    <name type="ordered locus">ECA3567</name>
</gene>
<evidence type="ECO:0000255" key="1">
    <source>
        <dbReference type="HAMAP-Rule" id="MF_01227"/>
    </source>
</evidence>
<protein>
    <recommendedName>
        <fullName evidence="1">CTP synthase</fullName>
        <ecNumber evidence="1">6.3.4.2</ecNumber>
    </recommendedName>
    <alternativeName>
        <fullName evidence="1">Cytidine 5'-triphosphate synthase</fullName>
    </alternativeName>
    <alternativeName>
        <fullName evidence="1">Cytidine triphosphate synthetase</fullName>
        <shortName evidence="1">CTP synthetase</shortName>
        <shortName evidence="1">CTPS</shortName>
    </alternativeName>
    <alternativeName>
        <fullName evidence="1">UTP--ammonia ligase</fullName>
    </alternativeName>
</protein>
<reference key="1">
    <citation type="journal article" date="2004" name="Proc. Natl. Acad. Sci. U.S.A.">
        <title>Genome sequence of the enterobacterial phytopathogen Erwinia carotovora subsp. atroseptica and characterization of virulence factors.</title>
        <authorList>
            <person name="Bell K.S."/>
            <person name="Sebaihia M."/>
            <person name="Pritchard L."/>
            <person name="Holden M.T.G."/>
            <person name="Hyman L.J."/>
            <person name="Holeva M.C."/>
            <person name="Thomson N.R."/>
            <person name="Bentley S.D."/>
            <person name="Churcher L.J.C."/>
            <person name="Mungall K."/>
            <person name="Atkin R."/>
            <person name="Bason N."/>
            <person name="Brooks K."/>
            <person name="Chillingworth T."/>
            <person name="Clark K."/>
            <person name="Doggett J."/>
            <person name="Fraser A."/>
            <person name="Hance Z."/>
            <person name="Hauser H."/>
            <person name="Jagels K."/>
            <person name="Moule S."/>
            <person name="Norbertczak H."/>
            <person name="Ormond D."/>
            <person name="Price C."/>
            <person name="Quail M.A."/>
            <person name="Sanders M."/>
            <person name="Walker D."/>
            <person name="Whitehead S."/>
            <person name="Salmond G.P.C."/>
            <person name="Birch P.R.J."/>
            <person name="Parkhill J."/>
            <person name="Toth I.K."/>
        </authorList>
    </citation>
    <scope>NUCLEOTIDE SEQUENCE [LARGE SCALE GENOMIC DNA]</scope>
    <source>
        <strain>SCRI 1043 / ATCC BAA-672</strain>
    </source>
</reference>
<proteinExistence type="inferred from homology"/>
<organism>
    <name type="scientific">Pectobacterium atrosepticum (strain SCRI 1043 / ATCC BAA-672)</name>
    <name type="common">Erwinia carotovora subsp. atroseptica</name>
    <dbReference type="NCBI Taxonomy" id="218491"/>
    <lineage>
        <taxon>Bacteria</taxon>
        <taxon>Pseudomonadati</taxon>
        <taxon>Pseudomonadota</taxon>
        <taxon>Gammaproteobacteria</taxon>
        <taxon>Enterobacterales</taxon>
        <taxon>Pectobacteriaceae</taxon>
        <taxon>Pectobacterium</taxon>
    </lineage>
</organism>
<sequence>MTTNYIFVTGGVVSSLGKGIAAASLAAILEARGLNVTIMKLDPYINVDPGTMSPTQHGEVFVTEDGAETDLDLGHYERFIRTKMSRRNNFTTGRIYSDVLRKERRGDYLGATIQVIPHITNAIKERIIEGGEGHDVVLVEIGGTVGDIESLPFLEAIRQMAVQVGREHTLFMHLTLVPYLAAAGEVKTKPTQHSVKELLSIGIQPDVLICRSDRTVPANERAKIALFCNVPEKAVISLKDIDSIYKIPALLKSQGLDDYICKRFSLNCPEANLSEWEQVVYEEANPGGEVTIGMVGKYVALPDAYKSVIEALKHGGLKNRLTVNIKLIDSQDVETRGVEVLKDLDAILIPGGFGYRGVEGKIMSANYARENNIPYLGICLGMQVALMEFARNVAGMEGANSTEFVPDCKYPVVALITEWRDENGDVEVRDEASDLGGTMRVGGQQCHLTEGSLVRQMYGEQTIIERHRHRYEVNNMLLKQIEAAGLRVAGLSADRKLVEIVELPDHPWFVACQFHPEFTSTPRDGHPLFAGFVKAAGAYQKRQVK</sequence>
<name>PYRG_PECAS</name>
<keyword id="KW-0067">ATP-binding</keyword>
<keyword id="KW-0315">Glutamine amidotransferase</keyword>
<keyword id="KW-0436">Ligase</keyword>
<keyword id="KW-0460">Magnesium</keyword>
<keyword id="KW-0479">Metal-binding</keyword>
<keyword id="KW-0547">Nucleotide-binding</keyword>
<keyword id="KW-0665">Pyrimidine biosynthesis</keyword>
<keyword id="KW-1185">Reference proteome</keyword>
<feature type="chain" id="PRO_0000266116" description="CTP synthase">
    <location>
        <begin position="1"/>
        <end position="545"/>
    </location>
</feature>
<feature type="domain" description="Glutamine amidotransferase type-1" evidence="1">
    <location>
        <begin position="291"/>
        <end position="542"/>
    </location>
</feature>
<feature type="region of interest" description="Amidoligase domain" evidence="1">
    <location>
        <begin position="1"/>
        <end position="266"/>
    </location>
</feature>
<feature type="active site" description="Nucleophile; for glutamine hydrolysis" evidence="1">
    <location>
        <position position="379"/>
    </location>
</feature>
<feature type="active site" evidence="1">
    <location>
        <position position="515"/>
    </location>
</feature>
<feature type="active site" evidence="1">
    <location>
        <position position="517"/>
    </location>
</feature>
<feature type="binding site" evidence="1">
    <location>
        <position position="14"/>
    </location>
    <ligand>
        <name>CTP</name>
        <dbReference type="ChEBI" id="CHEBI:37563"/>
        <note>allosteric inhibitor</note>
    </ligand>
</feature>
<feature type="binding site" evidence="1">
    <location>
        <position position="14"/>
    </location>
    <ligand>
        <name>UTP</name>
        <dbReference type="ChEBI" id="CHEBI:46398"/>
    </ligand>
</feature>
<feature type="binding site" evidence="1">
    <location>
        <begin position="15"/>
        <end position="20"/>
    </location>
    <ligand>
        <name>ATP</name>
        <dbReference type="ChEBI" id="CHEBI:30616"/>
    </ligand>
</feature>
<feature type="binding site" evidence="1">
    <location>
        <position position="72"/>
    </location>
    <ligand>
        <name>ATP</name>
        <dbReference type="ChEBI" id="CHEBI:30616"/>
    </ligand>
</feature>
<feature type="binding site" evidence="1">
    <location>
        <position position="72"/>
    </location>
    <ligand>
        <name>Mg(2+)</name>
        <dbReference type="ChEBI" id="CHEBI:18420"/>
    </ligand>
</feature>
<feature type="binding site" evidence="1">
    <location>
        <position position="140"/>
    </location>
    <ligand>
        <name>Mg(2+)</name>
        <dbReference type="ChEBI" id="CHEBI:18420"/>
    </ligand>
</feature>
<feature type="binding site" evidence="1">
    <location>
        <begin position="147"/>
        <end position="149"/>
    </location>
    <ligand>
        <name>CTP</name>
        <dbReference type="ChEBI" id="CHEBI:37563"/>
        <note>allosteric inhibitor</note>
    </ligand>
</feature>
<feature type="binding site" evidence="1">
    <location>
        <begin position="187"/>
        <end position="192"/>
    </location>
    <ligand>
        <name>CTP</name>
        <dbReference type="ChEBI" id="CHEBI:37563"/>
        <note>allosteric inhibitor</note>
    </ligand>
</feature>
<feature type="binding site" evidence="1">
    <location>
        <begin position="187"/>
        <end position="192"/>
    </location>
    <ligand>
        <name>UTP</name>
        <dbReference type="ChEBI" id="CHEBI:46398"/>
    </ligand>
</feature>
<feature type="binding site" evidence="1">
    <location>
        <position position="223"/>
    </location>
    <ligand>
        <name>CTP</name>
        <dbReference type="ChEBI" id="CHEBI:37563"/>
        <note>allosteric inhibitor</note>
    </ligand>
</feature>
<feature type="binding site" evidence="1">
    <location>
        <position position="223"/>
    </location>
    <ligand>
        <name>UTP</name>
        <dbReference type="ChEBI" id="CHEBI:46398"/>
    </ligand>
</feature>
<feature type="binding site" evidence="1">
    <location>
        <begin position="239"/>
        <end position="241"/>
    </location>
    <ligand>
        <name>ATP</name>
        <dbReference type="ChEBI" id="CHEBI:30616"/>
    </ligand>
</feature>
<feature type="binding site" evidence="1">
    <location>
        <position position="352"/>
    </location>
    <ligand>
        <name>L-glutamine</name>
        <dbReference type="ChEBI" id="CHEBI:58359"/>
    </ligand>
</feature>
<feature type="binding site" evidence="1">
    <location>
        <begin position="380"/>
        <end position="383"/>
    </location>
    <ligand>
        <name>L-glutamine</name>
        <dbReference type="ChEBI" id="CHEBI:58359"/>
    </ligand>
</feature>
<feature type="binding site" evidence="1">
    <location>
        <position position="403"/>
    </location>
    <ligand>
        <name>L-glutamine</name>
        <dbReference type="ChEBI" id="CHEBI:58359"/>
    </ligand>
</feature>
<feature type="binding site" evidence="1">
    <location>
        <position position="470"/>
    </location>
    <ligand>
        <name>L-glutamine</name>
        <dbReference type="ChEBI" id="CHEBI:58359"/>
    </ligand>
</feature>